<protein>
    <recommendedName>
        <fullName evidence="1">1-(5-phosphoribosyl)-5-[(5-phosphoribosylamino)methylideneamino] imidazole-4-carboxamide isomerase</fullName>
        <ecNumber evidence="1">5.3.1.16</ecNumber>
    </recommendedName>
    <alternativeName>
        <fullName evidence="1">Phosphoribosylformimino-5-aminoimidazole carboxamide ribotide isomerase</fullName>
    </alternativeName>
</protein>
<gene>
    <name evidence="1" type="primary">hisA</name>
    <name type="ordered locus">TTE2134</name>
</gene>
<sequence>MLVIPAIDILDGKCVRLTKGNFDSKEVYYDNPADMAKMWQECGAKRIHVVDLDGARQGHLVNRKVIEKIVNSCSVDIEVGGGIRNKEALDYLFSIGVSYIILGSAAIYDKDLLLYSVSHYGEKTIVGIDSKKREVAVSGWLERTKIKDTELAEKIKEIGIKTIIFTDISKDGTLHGPNFEALKDMLKVGVEIIASGGISSIEDLKRLKDMGVTGAIIGKALYTGMIDLKAALLELEREGI</sequence>
<name>HIS4_CALS4</name>
<feature type="chain" id="PRO_0000142070" description="1-(5-phosphoribosyl)-5-[(5-phosphoribosylamino)methylideneamino] imidazole-4-carboxamide isomerase">
    <location>
        <begin position="1"/>
        <end position="240"/>
    </location>
</feature>
<feature type="active site" description="Proton acceptor" evidence="1">
    <location>
        <position position="8"/>
    </location>
</feature>
<feature type="active site" description="Proton donor" evidence="1">
    <location>
        <position position="129"/>
    </location>
</feature>
<reference key="1">
    <citation type="journal article" date="2002" name="Genome Res.">
        <title>A complete sequence of the T. tengcongensis genome.</title>
        <authorList>
            <person name="Bao Q."/>
            <person name="Tian Y."/>
            <person name="Li W."/>
            <person name="Xu Z."/>
            <person name="Xuan Z."/>
            <person name="Hu S."/>
            <person name="Dong W."/>
            <person name="Yang J."/>
            <person name="Chen Y."/>
            <person name="Xue Y."/>
            <person name="Xu Y."/>
            <person name="Lai X."/>
            <person name="Huang L."/>
            <person name="Dong X."/>
            <person name="Ma Y."/>
            <person name="Ling L."/>
            <person name="Tan H."/>
            <person name="Chen R."/>
            <person name="Wang J."/>
            <person name="Yu J."/>
            <person name="Yang H."/>
        </authorList>
    </citation>
    <scope>NUCLEOTIDE SEQUENCE [LARGE SCALE GENOMIC DNA]</scope>
    <source>
        <strain>DSM 15242 / JCM 11007 / NBRC 100824 / MB4</strain>
    </source>
</reference>
<accession>Q8R884</accession>
<dbReference type="EC" id="5.3.1.16" evidence="1"/>
<dbReference type="EMBL" id="AE008691">
    <property type="protein sequence ID" value="AAM25299.1"/>
    <property type="molecule type" value="Genomic_DNA"/>
</dbReference>
<dbReference type="RefSeq" id="WP_011026235.1">
    <property type="nucleotide sequence ID" value="NC_003869.1"/>
</dbReference>
<dbReference type="SMR" id="Q8R884"/>
<dbReference type="STRING" id="273068.TTE2134"/>
<dbReference type="KEGG" id="tte:TTE2134"/>
<dbReference type="eggNOG" id="COG0106">
    <property type="taxonomic scope" value="Bacteria"/>
</dbReference>
<dbReference type="HOGENOM" id="CLU_048577_1_1_9"/>
<dbReference type="OrthoDB" id="9807749at2"/>
<dbReference type="UniPathway" id="UPA00031">
    <property type="reaction ID" value="UER00009"/>
</dbReference>
<dbReference type="Proteomes" id="UP000000555">
    <property type="component" value="Chromosome"/>
</dbReference>
<dbReference type="GO" id="GO:0005737">
    <property type="term" value="C:cytoplasm"/>
    <property type="evidence" value="ECO:0007669"/>
    <property type="project" value="UniProtKB-SubCell"/>
</dbReference>
<dbReference type="GO" id="GO:0003949">
    <property type="term" value="F:1-(5-phosphoribosyl)-5-[(5-phosphoribosylamino)methylideneamino]imidazole-4-carboxamide isomerase activity"/>
    <property type="evidence" value="ECO:0007669"/>
    <property type="project" value="UniProtKB-UniRule"/>
</dbReference>
<dbReference type="GO" id="GO:0000105">
    <property type="term" value="P:L-histidine biosynthetic process"/>
    <property type="evidence" value="ECO:0007669"/>
    <property type="project" value="UniProtKB-UniRule"/>
</dbReference>
<dbReference type="GO" id="GO:0000162">
    <property type="term" value="P:L-tryptophan biosynthetic process"/>
    <property type="evidence" value="ECO:0007669"/>
    <property type="project" value="TreeGrafter"/>
</dbReference>
<dbReference type="CDD" id="cd04732">
    <property type="entry name" value="HisA"/>
    <property type="match status" value="1"/>
</dbReference>
<dbReference type="FunFam" id="3.20.20.70:FF:000009">
    <property type="entry name" value="1-(5-phosphoribosyl)-5-[(5-phosphoribosylamino)methylideneamino] imidazole-4-carboxamide isomerase"/>
    <property type="match status" value="1"/>
</dbReference>
<dbReference type="Gene3D" id="3.20.20.70">
    <property type="entry name" value="Aldolase class I"/>
    <property type="match status" value="1"/>
</dbReference>
<dbReference type="HAMAP" id="MF_01014">
    <property type="entry name" value="HisA"/>
    <property type="match status" value="1"/>
</dbReference>
<dbReference type="InterPro" id="IPR013785">
    <property type="entry name" value="Aldolase_TIM"/>
</dbReference>
<dbReference type="InterPro" id="IPR006062">
    <property type="entry name" value="His_biosynth"/>
</dbReference>
<dbReference type="InterPro" id="IPR006063">
    <property type="entry name" value="HisA_bact_arch"/>
</dbReference>
<dbReference type="InterPro" id="IPR044524">
    <property type="entry name" value="Isoase_HisA-like"/>
</dbReference>
<dbReference type="InterPro" id="IPR023016">
    <property type="entry name" value="Isoase_HisA-like_bact"/>
</dbReference>
<dbReference type="InterPro" id="IPR011060">
    <property type="entry name" value="RibuloseP-bd_barrel"/>
</dbReference>
<dbReference type="NCBIfam" id="TIGR00007">
    <property type="entry name" value="1-(5-phosphoribosyl)-5-[(5-phosphoribosylamino)methylideneamino]imidazole-4-carboxamide isomerase"/>
    <property type="match status" value="1"/>
</dbReference>
<dbReference type="PANTHER" id="PTHR43090">
    <property type="entry name" value="1-(5-PHOSPHORIBOSYL)-5-[(5-PHOSPHORIBOSYLAMINO)METHYLIDENEAMINO] IMIDAZOLE-4-CARBOXAMIDE ISOMERASE"/>
    <property type="match status" value="1"/>
</dbReference>
<dbReference type="PANTHER" id="PTHR43090:SF2">
    <property type="entry name" value="1-(5-PHOSPHORIBOSYL)-5-[(5-PHOSPHORIBOSYLAMINO)METHYLIDENEAMINO] IMIDAZOLE-4-CARBOXAMIDE ISOMERASE"/>
    <property type="match status" value="1"/>
</dbReference>
<dbReference type="Pfam" id="PF00977">
    <property type="entry name" value="His_biosynth"/>
    <property type="match status" value="1"/>
</dbReference>
<dbReference type="SUPFAM" id="SSF51366">
    <property type="entry name" value="Ribulose-phoshate binding barrel"/>
    <property type="match status" value="1"/>
</dbReference>
<comment type="catalytic activity">
    <reaction evidence="1">
        <text>1-(5-phospho-beta-D-ribosyl)-5-[(5-phospho-beta-D-ribosylamino)methylideneamino]imidazole-4-carboxamide = 5-[(5-phospho-1-deoxy-D-ribulos-1-ylimino)methylamino]-1-(5-phospho-beta-D-ribosyl)imidazole-4-carboxamide</text>
        <dbReference type="Rhea" id="RHEA:15469"/>
        <dbReference type="ChEBI" id="CHEBI:58435"/>
        <dbReference type="ChEBI" id="CHEBI:58525"/>
        <dbReference type="EC" id="5.3.1.16"/>
    </reaction>
</comment>
<comment type="pathway">
    <text evidence="1">Amino-acid biosynthesis; L-histidine biosynthesis; L-histidine from 5-phospho-alpha-D-ribose 1-diphosphate: step 4/9.</text>
</comment>
<comment type="subcellular location">
    <subcellularLocation>
        <location evidence="1">Cytoplasm</location>
    </subcellularLocation>
</comment>
<comment type="similarity">
    <text evidence="1">Belongs to the HisA/HisF family.</text>
</comment>
<organism>
    <name type="scientific">Caldanaerobacter subterraneus subsp. tengcongensis (strain DSM 15242 / JCM 11007 / NBRC 100824 / MB4)</name>
    <name type="common">Thermoanaerobacter tengcongensis</name>
    <dbReference type="NCBI Taxonomy" id="273068"/>
    <lineage>
        <taxon>Bacteria</taxon>
        <taxon>Bacillati</taxon>
        <taxon>Bacillota</taxon>
        <taxon>Clostridia</taxon>
        <taxon>Thermoanaerobacterales</taxon>
        <taxon>Thermoanaerobacteraceae</taxon>
        <taxon>Caldanaerobacter</taxon>
    </lineage>
</organism>
<evidence type="ECO:0000255" key="1">
    <source>
        <dbReference type="HAMAP-Rule" id="MF_01014"/>
    </source>
</evidence>
<keyword id="KW-0028">Amino-acid biosynthesis</keyword>
<keyword id="KW-0963">Cytoplasm</keyword>
<keyword id="KW-0368">Histidine biosynthesis</keyword>
<keyword id="KW-0413">Isomerase</keyword>
<keyword id="KW-1185">Reference proteome</keyword>
<proteinExistence type="inferred from homology"/>